<keyword id="KW-0687">Ribonucleoprotein</keyword>
<keyword id="KW-0689">Ribosomal protein</keyword>
<keyword id="KW-0694">RNA-binding</keyword>
<keyword id="KW-0699">rRNA-binding</keyword>
<comment type="function">
    <text evidence="1">Binds 16S rRNA, required for the assembly of 30S particles and may also be responsible for determining the conformation of the 16S rRNA at the A site.</text>
</comment>
<comment type="subunit">
    <text evidence="1">Part of the 30S ribosomal subunit. Contacts proteins S3 and S10.</text>
</comment>
<comment type="similarity">
    <text evidence="1">Belongs to the universal ribosomal protein uS14 family.</text>
</comment>
<accession>Q821V2</accession>
<name>RS14_CHLCV</name>
<protein>
    <recommendedName>
        <fullName evidence="1">Small ribosomal subunit protein uS14</fullName>
    </recommendedName>
    <alternativeName>
        <fullName evidence="2">30S ribosomal protein S14</fullName>
    </alternativeName>
</protein>
<organism>
    <name type="scientific">Chlamydia caviae (strain ATCC VR-813 / DSM 19441 / 03DC25 / GPIC)</name>
    <name type="common">Chlamydophila caviae</name>
    <dbReference type="NCBI Taxonomy" id="227941"/>
    <lineage>
        <taxon>Bacteria</taxon>
        <taxon>Pseudomonadati</taxon>
        <taxon>Chlamydiota</taxon>
        <taxon>Chlamydiia</taxon>
        <taxon>Chlamydiales</taxon>
        <taxon>Chlamydiaceae</taxon>
        <taxon>Chlamydia/Chlamydophila group</taxon>
        <taxon>Chlamydia</taxon>
    </lineage>
</organism>
<dbReference type="EMBL" id="AE015925">
    <property type="protein sequence ID" value="AAP05574.1"/>
    <property type="molecule type" value="Genomic_DNA"/>
</dbReference>
<dbReference type="RefSeq" id="WP_011006788.1">
    <property type="nucleotide sequence ID" value="NC_003361.3"/>
</dbReference>
<dbReference type="SMR" id="Q821V2"/>
<dbReference type="STRING" id="227941.CCA_00833"/>
<dbReference type="KEGG" id="cca:CCA_00833"/>
<dbReference type="eggNOG" id="COG0199">
    <property type="taxonomic scope" value="Bacteria"/>
</dbReference>
<dbReference type="HOGENOM" id="CLU_139869_0_1_0"/>
<dbReference type="OrthoDB" id="9810484at2"/>
<dbReference type="Proteomes" id="UP000002193">
    <property type="component" value="Chromosome"/>
</dbReference>
<dbReference type="GO" id="GO:0005737">
    <property type="term" value="C:cytoplasm"/>
    <property type="evidence" value="ECO:0007669"/>
    <property type="project" value="UniProtKB-ARBA"/>
</dbReference>
<dbReference type="GO" id="GO:0015935">
    <property type="term" value="C:small ribosomal subunit"/>
    <property type="evidence" value="ECO:0007669"/>
    <property type="project" value="TreeGrafter"/>
</dbReference>
<dbReference type="GO" id="GO:0019843">
    <property type="term" value="F:rRNA binding"/>
    <property type="evidence" value="ECO:0007669"/>
    <property type="project" value="UniProtKB-UniRule"/>
</dbReference>
<dbReference type="GO" id="GO:0003735">
    <property type="term" value="F:structural constituent of ribosome"/>
    <property type="evidence" value="ECO:0007669"/>
    <property type="project" value="InterPro"/>
</dbReference>
<dbReference type="GO" id="GO:0006412">
    <property type="term" value="P:translation"/>
    <property type="evidence" value="ECO:0007669"/>
    <property type="project" value="UniProtKB-UniRule"/>
</dbReference>
<dbReference type="FunFam" id="1.10.287.1480:FF:000001">
    <property type="entry name" value="30S ribosomal protein S14"/>
    <property type="match status" value="1"/>
</dbReference>
<dbReference type="Gene3D" id="1.10.287.1480">
    <property type="match status" value="1"/>
</dbReference>
<dbReference type="HAMAP" id="MF_00537">
    <property type="entry name" value="Ribosomal_uS14_1"/>
    <property type="match status" value="1"/>
</dbReference>
<dbReference type="InterPro" id="IPR001209">
    <property type="entry name" value="Ribosomal_uS14"/>
</dbReference>
<dbReference type="InterPro" id="IPR023036">
    <property type="entry name" value="Ribosomal_uS14_bac/plastid"/>
</dbReference>
<dbReference type="InterPro" id="IPR018271">
    <property type="entry name" value="Ribosomal_uS14_CS"/>
</dbReference>
<dbReference type="NCBIfam" id="NF006477">
    <property type="entry name" value="PRK08881.1"/>
    <property type="match status" value="1"/>
</dbReference>
<dbReference type="PANTHER" id="PTHR19836">
    <property type="entry name" value="30S RIBOSOMAL PROTEIN S14"/>
    <property type="match status" value="1"/>
</dbReference>
<dbReference type="PANTHER" id="PTHR19836:SF19">
    <property type="entry name" value="SMALL RIBOSOMAL SUBUNIT PROTEIN US14M"/>
    <property type="match status" value="1"/>
</dbReference>
<dbReference type="Pfam" id="PF00253">
    <property type="entry name" value="Ribosomal_S14"/>
    <property type="match status" value="1"/>
</dbReference>
<dbReference type="SUPFAM" id="SSF57716">
    <property type="entry name" value="Glucocorticoid receptor-like (DNA-binding domain)"/>
    <property type="match status" value="1"/>
</dbReference>
<dbReference type="PROSITE" id="PS00527">
    <property type="entry name" value="RIBOSOMAL_S14"/>
    <property type="match status" value="1"/>
</dbReference>
<evidence type="ECO:0000255" key="1">
    <source>
        <dbReference type="HAMAP-Rule" id="MF_00537"/>
    </source>
</evidence>
<evidence type="ECO:0000305" key="2"/>
<reference key="1">
    <citation type="journal article" date="2003" name="Nucleic Acids Res.">
        <title>Genome sequence of Chlamydophila caviae (Chlamydia psittaci GPIC): examining the role of niche-specific genes in the evolution of the Chlamydiaceae.</title>
        <authorList>
            <person name="Read T.D."/>
            <person name="Myers G.S.A."/>
            <person name="Brunham R.C."/>
            <person name="Nelson W.C."/>
            <person name="Paulsen I.T."/>
            <person name="Heidelberg J.F."/>
            <person name="Holtzapple E.K."/>
            <person name="Khouri H.M."/>
            <person name="Federova N.B."/>
            <person name="Carty H.A."/>
            <person name="Umayam L.A."/>
            <person name="Haft D.H."/>
            <person name="Peterson J.D."/>
            <person name="Beanan M.J."/>
            <person name="White O."/>
            <person name="Salzberg S.L."/>
            <person name="Hsia R.-C."/>
            <person name="McClarty G."/>
            <person name="Rank R.G."/>
            <person name="Bavoil P.M."/>
            <person name="Fraser C.M."/>
        </authorList>
    </citation>
    <scope>NUCLEOTIDE SEQUENCE [LARGE SCALE GENOMIC DNA]</scope>
    <source>
        <strain>ATCC VR-813 / DSM 19441 / 03DC25 / GPIC</strain>
    </source>
</reference>
<feature type="chain" id="PRO_1000128351" description="Small ribosomal subunit protein uS14">
    <location>
        <begin position="1"/>
        <end position="101"/>
    </location>
</feature>
<proteinExistence type="inferred from homology"/>
<gene>
    <name evidence="1" type="primary">rpsN</name>
    <name type="ordered locus">CCA_00833</name>
</gene>
<sequence>MAKKSAVARENKRRRLVEANYKKRSELRNIAKSLTASEEEKENARVALNKMRRDTAHIRLHNRCLLTGRPRGYLRKFAISRICFREMASMGEIPGVIKASW</sequence>